<feature type="chain" id="PRO_1000061008" description="Small ribosomal subunit protein uS9">
    <location>
        <begin position="1"/>
        <end position="134"/>
    </location>
</feature>
<feature type="region of interest" description="Disordered" evidence="2">
    <location>
        <begin position="109"/>
        <end position="134"/>
    </location>
</feature>
<feature type="compositionally biased region" description="Basic residues" evidence="2">
    <location>
        <begin position="118"/>
        <end position="134"/>
    </location>
</feature>
<gene>
    <name evidence="1" type="primary">rps9</name>
    <name type="ordered locus">MMP1325</name>
</gene>
<evidence type="ECO:0000255" key="1">
    <source>
        <dbReference type="HAMAP-Rule" id="MF_00532"/>
    </source>
</evidence>
<evidence type="ECO:0000256" key="2">
    <source>
        <dbReference type="SAM" id="MobiDB-lite"/>
    </source>
</evidence>
<evidence type="ECO:0000305" key="3"/>
<reference key="1">
    <citation type="journal article" date="2004" name="J. Bacteriol.">
        <title>Complete genome sequence of the genetically tractable hydrogenotrophic methanogen Methanococcus maripaludis.</title>
        <authorList>
            <person name="Hendrickson E.L."/>
            <person name="Kaul R."/>
            <person name="Zhou Y."/>
            <person name="Bovee D."/>
            <person name="Chapman P."/>
            <person name="Chung J."/>
            <person name="Conway de Macario E."/>
            <person name="Dodsworth J.A."/>
            <person name="Gillett W."/>
            <person name="Graham D.E."/>
            <person name="Hackett M."/>
            <person name="Haydock A.K."/>
            <person name="Kang A."/>
            <person name="Land M.L."/>
            <person name="Levy R."/>
            <person name="Lie T.J."/>
            <person name="Major T.A."/>
            <person name="Moore B.C."/>
            <person name="Porat I."/>
            <person name="Palmeiri A."/>
            <person name="Rouse G."/>
            <person name="Saenphimmachak C."/>
            <person name="Soell D."/>
            <person name="Van Dien S."/>
            <person name="Wang T."/>
            <person name="Whitman W.B."/>
            <person name="Xia Q."/>
            <person name="Zhang Y."/>
            <person name="Larimer F.W."/>
            <person name="Olson M.V."/>
            <person name="Leigh J.A."/>
        </authorList>
    </citation>
    <scope>NUCLEOTIDE SEQUENCE [LARGE SCALE GENOMIC DNA]</scope>
    <source>
        <strain>DSM 14266 / JCM 13030 / NBRC 101832 / S2 / LL</strain>
    </source>
</reference>
<name>RS9_METMP</name>
<accession>Q6LXM5</accession>
<proteinExistence type="inferred from homology"/>
<dbReference type="EMBL" id="BX950229">
    <property type="protein sequence ID" value="CAF30881.1"/>
    <property type="molecule type" value="Genomic_DNA"/>
</dbReference>
<dbReference type="RefSeq" id="WP_011171269.1">
    <property type="nucleotide sequence ID" value="NC_005791.1"/>
</dbReference>
<dbReference type="SMR" id="Q6LXM5"/>
<dbReference type="STRING" id="267377.MMP1325"/>
<dbReference type="EnsemblBacteria" id="CAF30881">
    <property type="protein sequence ID" value="CAF30881"/>
    <property type="gene ID" value="MMP1325"/>
</dbReference>
<dbReference type="KEGG" id="mmp:MMP1325"/>
<dbReference type="PATRIC" id="fig|267377.15.peg.1360"/>
<dbReference type="eggNOG" id="arCOG04243">
    <property type="taxonomic scope" value="Archaea"/>
</dbReference>
<dbReference type="HOGENOM" id="CLU_046483_4_0_2"/>
<dbReference type="OrthoDB" id="52677at2157"/>
<dbReference type="Proteomes" id="UP000000590">
    <property type="component" value="Chromosome"/>
</dbReference>
<dbReference type="GO" id="GO:0022627">
    <property type="term" value="C:cytosolic small ribosomal subunit"/>
    <property type="evidence" value="ECO:0007669"/>
    <property type="project" value="TreeGrafter"/>
</dbReference>
<dbReference type="GO" id="GO:0003723">
    <property type="term" value="F:RNA binding"/>
    <property type="evidence" value="ECO:0007669"/>
    <property type="project" value="TreeGrafter"/>
</dbReference>
<dbReference type="GO" id="GO:0003735">
    <property type="term" value="F:structural constituent of ribosome"/>
    <property type="evidence" value="ECO:0007669"/>
    <property type="project" value="InterPro"/>
</dbReference>
<dbReference type="GO" id="GO:0000462">
    <property type="term" value="P:maturation of SSU-rRNA from tricistronic rRNA transcript (SSU-rRNA, 5.8S rRNA, LSU-rRNA)"/>
    <property type="evidence" value="ECO:0007669"/>
    <property type="project" value="TreeGrafter"/>
</dbReference>
<dbReference type="GO" id="GO:0006412">
    <property type="term" value="P:translation"/>
    <property type="evidence" value="ECO:0007669"/>
    <property type="project" value="UniProtKB-UniRule"/>
</dbReference>
<dbReference type="Gene3D" id="3.30.230.10">
    <property type="match status" value="1"/>
</dbReference>
<dbReference type="HAMAP" id="MF_00532_A">
    <property type="entry name" value="Ribosomal_uS9_A"/>
    <property type="match status" value="1"/>
</dbReference>
<dbReference type="InterPro" id="IPR020568">
    <property type="entry name" value="Ribosomal_Su5_D2-typ_SF"/>
</dbReference>
<dbReference type="InterPro" id="IPR000754">
    <property type="entry name" value="Ribosomal_uS9"/>
</dbReference>
<dbReference type="InterPro" id="IPR019958">
    <property type="entry name" value="Ribosomal_uS9_archaeal"/>
</dbReference>
<dbReference type="InterPro" id="IPR020574">
    <property type="entry name" value="Ribosomal_uS9_CS"/>
</dbReference>
<dbReference type="InterPro" id="IPR014721">
    <property type="entry name" value="Ribsml_uS5_D2-typ_fold_subgr"/>
</dbReference>
<dbReference type="NCBIfam" id="NF001749">
    <property type="entry name" value="PRK00474.1"/>
    <property type="match status" value="1"/>
</dbReference>
<dbReference type="NCBIfam" id="TIGR03627">
    <property type="entry name" value="uS9_arch"/>
    <property type="match status" value="1"/>
</dbReference>
<dbReference type="PANTHER" id="PTHR21569:SF16">
    <property type="entry name" value="RIBOSOMAL PROTEIN S16"/>
    <property type="match status" value="1"/>
</dbReference>
<dbReference type="PANTHER" id="PTHR21569">
    <property type="entry name" value="RIBOSOMAL PROTEIN S9"/>
    <property type="match status" value="1"/>
</dbReference>
<dbReference type="Pfam" id="PF00380">
    <property type="entry name" value="Ribosomal_S9"/>
    <property type="match status" value="1"/>
</dbReference>
<dbReference type="SUPFAM" id="SSF54211">
    <property type="entry name" value="Ribosomal protein S5 domain 2-like"/>
    <property type="match status" value="1"/>
</dbReference>
<dbReference type="PROSITE" id="PS00360">
    <property type="entry name" value="RIBOSOMAL_S9"/>
    <property type="match status" value="1"/>
</dbReference>
<comment type="similarity">
    <text evidence="1">Belongs to the universal ribosomal protein uS9 family.</text>
</comment>
<protein>
    <recommendedName>
        <fullName evidence="1">Small ribosomal subunit protein uS9</fullName>
    </recommendedName>
    <alternativeName>
        <fullName evidence="3">30S ribosomal protein S9</fullName>
    </alternativeName>
</protein>
<keyword id="KW-1185">Reference proteome</keyword>
<keyword id="KW-0687">Ribonucleoprotein</keyword>
<keyword id="KW-0689">Ribosomal protein</keyword>
<organism>
    <name type="scientific">Methanococcus maripaludis (strain DSM 14266 / JCM 13030 / NBRC 101832 / S2 / LL)</name>
    <dbReference type="NCBI Taxonomy" id="267377"/>
    <lineage>
        <taxon>Archaea</taxon>
        <taxon>Methanobacteriati</taxon>
        <taxon>Methanobacteriota</taxon>
        <taxon>Methanomada group</taxon>
        <taxon>Methanococci</taxon>
        <taxon>Methanococcales</taxon>
        <taxon>Methanococcaceae</taxon>
        <taxon>Methanococcus</taxon>
    </lineage>
</organism>
<sequence length="134" mass="14910">MKVVHTVGKRRTAIARATAKEGSGKIRINKKPLELMEPKYIKMKLMEPVILAGEALSNIDVDIDVKGGGIVSQMDATRTALGKAIVEFTGKMDLKEKFLSYDRTLLVSDARRTEPHKPSKSSKGPRAKRQKSYR</sequence>